<proteinExistence type="evidence at protein level"/>
<dbReference type="EMBL" id="U14003">
    <property type="protein sequence ID" value="AAA97008.1"/>
    <property type="molecule type" value="Genomic_DNA"/>
</dbReference>
<dbReference type="EMBL" id="U00096">
    <property type="protein sequence ID" value="AAC77070.1"/>
    <property type="molecule type" value="Genomic_DNA"/>
</dbReference>
<dbReference type="EMBL" id="AP009048">
    <property type="protein sequence ID" value="BAE78111.1"/>
    <property type="molecule type" value="Genomic_DNA"/>
</dbReference>
<dbReference type="PIR" id="S56337">
    <property type="entry name" value="S56337"/>
</dbReference>
<dbReference type="RefSeq" id="NP_418533.1">
    <property type="nucleotide sequence ID" value="NC_000913.3"/>
</dbReference>
<dbReference type="RefSeq" id="WP_000288603.1">
    <property type="nucleotide sequence ID" value="NZ_LN832404.1"/>
</dbReference>
<dbReference type="BioGRID" id="4263087">
    <property type="interactions" value="19"/>
</dbReference>
<dbReference type="BioGRID" id="852912">
    <property type="interactions" value="2"/>
</dbReference>
<dbReference type="FunCoup" id="P0DM85">
    <property type="interactions" value="50"/>
</dbReference>
<dbReference type="IntAct" id="P0DM85">
    <property type="interactions" value="13"/>
</dbReference>
<dbReference type="STRING" id="511145.b4109"/>
<dbReference type="PaxDb" id="511145-b4109"/>
<dbReference type="EnsemblBacteria" id="AAC77070">
    <property type="protein sequence ID" value="AAC77070"/>
    <property type="gene ID" value="b4109"/>
</dbReference>
<dbReference type="GeneID" id="948620"/>
<dbReference type="KEGG" id="ecj:JW4070"/>
<dbReference type="KEGG" id="eco:b4109"/>
<dbReference type="KEGG" id="ecoc:C3026_22200"/>
<dbReference type="PATRIC" id="fig|511145.12.peg.4240"/>
<dbReference type="EchoBASE" id="EB1195"/>
<dbReference type="eggNOG" id="COG0699">
    <property type="taxonomic scope" value="Bacteria"/>
</dbReference>
<dbReference type="HOGENOM" id="CLU_011600_2_0_6"/>
<dbReference type="InParanoid" id="P0DM85"/>
<dbReference type="OMA" id="QRWVQDF"/>
<dbReference type="OrthoDB" id="6565187at2"/>
<dbReference type="BioCyc" id="EcoCyc:EG11210-MONOMER"/>
<dbReference type="PRO" id="PR:P0DM85"/>
<dbReference type="Proteomes" id="UP000000625">
    <property type="component" value="Chromosome"/>
</dbReference>
<dbReference type="GO" id="GO:0043590">
    <property type="term" value="C:bacterial nucleoid"/>
    <property type="evidence" value="ECO:0000314"/>
    <property type="project" value="EcoCyc"/>
</dbReference>
<dbReference type="GO" id="GO:0005737">
    <property type="term" value="C:cytoplasm"/>
    <property type="evidence" value="ECO:0007669"/>
    <property type="project" value="UniProtKB-SubCell"/>
</dbReference>
<dbReference type="GO" id="GO:0005525">
    <property type="term" value="F:GTP binding"/>
    <property type="evidence" value="ECO:0007669"/>
    <property type="project" value="InterPro"/>
</dbReference>
<dbReference type="GO" id="GO:0003924">
    <property type="term" value="F:GTPase activity"/>
    <property type="evidence" value="ECO:0000314"/>
    <property type="project" value="EcoCyc"/>
</dbReference>
<dbReference type="GO" id="GO:0043022">
    <property type="term" value="F:ribosome binding"/>
    <property type="evidence" value="ECO:0000318"/>
    <property type="project" value="GO_Central"/>
</dbReference>
<dbReference type="GO" id="GO:0007059">
    <property type="term" value="P:chromosome segregation"/>
    <property type="evidence" value="ECO:0000315"/>
    <property type="project" value="EcoCyc"/>
</dbReference>
<dbReference type="GO" id="GO:0006260">
    <property type="term" value="P:DNA replication"/>
    <property type="evidence" value="ECO:0007669"/>
    <property type="project" value="UniProtKB-KW"/>
</dbReference>
<dbReference type="GO" id="GO:1900231">
    <property type="term" value="P:regulation of single-species biofilm formation on inanimate substrate"/>
    <property type="evidence" value="ECO:0000315"/>
    <property type="project" value="EcoCyc"/>
</dbReference>
<dbReference type="CDD" id="cd00882">
    <property type="entry name" value="Ras_like_GTPase"/>
    <property type="match status" value="1"/>
</dbReference>
<dbReference type="Gene3D" id="3.40.50.300">
    <property type="entry name" value="P-loop containing nucleotide triphosphate hydrolases"/>
    <property type="match status" value="1"/>
</dbReference>
<dbReference type="InterPro" id="IPR045063">
    <property type="entry name" value="Dynamin_N"/>
</dbReference>
<dbReference type="InterPro" id="IPR030381">
    <property type="entry name" value="G_DYNAMIN_dom"/>
</dbReference>
<dbReference type="InterPro" id="IPR027417">
    <property type="entry name" value="P-loop_NTPase"/>
</dbReference>
<dbReference type="NCBIfam" id="NF007368">
    <property type="entry name" value="PRK09866.1"/>
    <property type="match status" value="1"/>
</dbReference>
<dbReference type="PANTHER" id="PTHR43834">
    <property type="entry name" value="GTPASE DER"/>
    <property type="match status" value="1"/>
</dbReference>
<dbReference type="PANTHER" id="PTHR43834:SF6">
    <property type="entry name" value="GTPASE DER"/>
    <property type="match status" value="1"/>
</dbReference>
<dbReference type="Pfam" id="PF00350">
    <property type="entry name" value="Dynamin_N"/>
    <property type="match status" value="1"/>
</dbReference>
<dbReference type="SUPFAM" id="SSF52540">
    <property type="entry name" value="P-loop containing nucleoside triphosphate hydrolases"/>
    <property type="match status" value="1"/>
</dbReference>
<dbReference type="PROSITE" id="PS51718">
    <property type="entry name" value="G_DYNAMIN_2"/>
    <property type="match status" value="1"/>
</dbReference>
<feature type="chain" id="PRO_0000169728" description="Clamp-binding protein CrfC">
    <location>
        <begin position="1"/>
        <end position="742"/>
    </location>
</feature>
<feature type="domain" description="Dynamin-type G" evidence="2">
    <location>
        <begin position="66"/>
        <end position="402"/>
    </location>
</feature>
<feature type="region of interest" description="Clamp-binding consensus">
    <location>
        <begin position="41"/>
        <end position="45"/>
    </location>
</feature>
<feature type="region of interest" description="G1 motif" evidence="2">
    <location>
        <begin position="76"/>
        <end position="83"/>
    </location>
</feature>
<feature type="region of interest" description="G2 motif" evidence="2">
    <location>
        <begin position="102"/>
        <end position="104"/>
    </location>
</feature>
<feature type="region of interest" description="G3 motif" evidence="2">
    <location>
        <begin position="236"/>
        <end position="239"/>
    </location>
</feature>
<feature type="region of interest" description="G4 motif" evidence="2">
    <location>
        <begin position="297"/>
        <end position="300"/>
    </location>
</feature>
<feature type="region of interest" description="G5 motif" evidence="2">
    <location>
        <begin position="331"/>
        <end position="334"/>
    </location>
</feature>
<feature type="coiled-coil region" evidence="1">
    <location>
        <begin position="440"/>
        <end position="472"/>
    </location>
</feature>
<feature type="mutagenesis site" description="Interacts with beta sliding clamp." evidence="3">
    <original>Q</original>
    <variation>A</variation>
    <location>
        <position position="23"/>
    </location>
</feature>
<feature type="mutagenesis site" description="No longer interacts with beta sliding clamp, pattern of CrfC foci changes." evidence="3">
    <original>Q</original>
    <variation>A</variation>
    <location>
        <position position="41"/>
    </location>
</feature>
<feature type="mutagenesis site" description="Interacts with beta sliding clamp." evidence="3">
    <original>Q</original>
    <variation>A</variation>
    <location>
        <position position="734"/>
    </location>
</feature>
<comment type="function">
    <text evidence="3">Important for the colocalization of sister nascent DNA strands after replication fork passage during DNA replication, and for positioning and subsequent partitioning of sister chromosomes. Does not have GTPase activity on its own.</text>
</comment>
<comment type="subunit">
    <text evidence="3">Forms homooligomers. Binds to the beta sliding clamp processivity factor (DnaN) in the presence and absence of DNA, may bind to the clamp itself as homodimers or trimers. Homooligomers may be able to bind more than 1 clamp complex.</text>
</comment>
<comment type="subcellular location">
    <subcellularLocation>
        <location evidence="3">Cytoplasm</location>
    </subcellularLocation>
    <text>About half the protein co-localizes with beta sliding clamp (DnaN) at midcell, the rest without clamp in quarter-cell positions when chromosomes are condensed during DNA replication.</text>
</comment>
<comment type="disruption phenotype">
    <text evidence="3">A small proportion of anucleate cells, disrupts nucleoid positioning, leads to premature separation of sister replication forks.</text>
</comment>
<comment type="similarity">
    <text evidence="2">Belongs to the TRAFAC class dynamin-like GTPase superfamily. Dynamin/Fzo/YdjA family.</text>
</comment>
<name>CRFC_ECOLI</name>
<keyword id="KW-0159">Chromosome partition</keyword>
<keyword id="KW-0175">Coiled coil</keyword>
<keyword id="KW-0963">Cytoplasm</keyword>
<keyword id="KW-0235">DNA replication</keyword>
<keyword id="KW-1185">Reference proteome</keyword>
<organism>
    <name type="scientific">Escherichia coli (strain K12)</name>
    <dbReference type="NCBI Taxonomy" id="83333"/>
    <lineage>
        <taxon>Bacteria</taxon>
        <taxon>Pseudomonadati</taxon>
        <taxon>Pseudomonadota</taxon>
        <taxon>Gammaproteobacteria</taxon>
        <taxon>Enterobacterales</taxon>
        <taxon>Enterobacteriaceae</taxon>
        <taxon>Escherichia</taxon>
    </lineage>
</organism>
<gene>
    <name type="primary">crfC</name>
    <name type="synonym">yjdA</name>
    <name type="ordered locus">b4109</name>
    <name type="ordered locus">JW4070</name>
</gene>
<sequence length="742" mass="84371">MYTQTLYELSQEAERLLQLSRQQLQLLEKMPLSVPGDDAPQLALPWSQPNIAERHAMLNNELRKISRLEMVLAIVGTMKAGKSTTINAIVGTEVLPNRNRPMTALPTLIRHTPGQKEPVLHFSHVAPIDCLIQQLQQRLRDCDIKHLTDVLEIDKDMRALMQRIENGVAFEKYYLGAQPIFHCLKSLNDLVRLAKALDVDFPFSAYAAIEHIPVIEVEFVHLAGLESYPGQLTLLDTPGPNEAGQPHLQKMLNQQLARASAVLAVLDYTQLKSISDEEVREAILAVGQSVPLYVLVNKFDQQDRNSDDADQVRALISGTLMKGCITPQQIFPVSSMWGYLANRARYELANNGKLPPPEQQRWVEDFAHAALGRRWRHADLADLEHIRHAADQLWEDSLFAQPIQALLHAAYANASLYALRSAAHKLLNYAQQAREYLDFRAHGLNVACEQLRQNIHQIEESLQLLQLNQAQVSGEIKHEIELALTSANHFLRQQQDALKVQLAALFQDDSEPLSEIRTRCETLLQTAQNTISRDFTLRFAELESTLCRVLTDVIRPIEQQVKMELSESGFRPGFHFPVFHGVVPHFNTRQLFSEVISRQEATDEQSTRLGVVRETFSRWLNQPDWGRGNEKSPTETVDYSVLQRALSAEVDLYCQQMAKVLAEQVDESVTAGMNTFFAEFASCLTELQTRLRESLALRQQNESVVRLMQQQLQQTVMTHGWIYTDAQLLRDDIQTLFTAERY</sequence>
<accession>P0DM85</accession>
<accession>P16694</accession>
<accession>Q2M6J5</accession>
<evidence type="ECO:0000255" key="1"/>
<evidence type="ECO:0000255" key="2">
    <source>
        <dbReference type="PROSITE-ProRule" id="PRU01055"/>
    </source>
</evidence>
<evidence type="ECO:0000269" key="3">
    <source>
    </source>
</evidence>
<protein>
    <recommendedName>
        <fullName>Clamp-binding protein CrfC</fullName>
    </recommendedName>
    <alternativeName>
        <fullName>Clamp-binding sister replication fork colocalization protein</fullName>
    </alternativeName>
</protein>
<reference key="1">
    <citation type="journal article" date="1995" name="Nucleic Acids Res.">
        <title>Analysis of the Escherichia coli genome VI: DNA sequence of the region from 92.8 through 100 minutes.</title>
        <authorList>
            <person name="Burland V.D."/>
            <person name="Plunkett G. III"/>
            <person name="Sofia H.J."/>
            <person name="Daniels D.L."/>
            <person name="Blattner F.R."/>
        </authorList>
    </citation>
    <scope>NUCLEOTIDE SEQUENCE [LARGE SCALE GENOMIC DNA]</scope>
    <source>
        <strain>K12 / MG1655 / ATCC 47076</strain>
    </source>
</reference>
<reference key="2">
    <citation type="journal article" date="1997" name="Science">
        <title>The complete genome sequence of Escherichia coli K-12.</title>
        <authorList>
            <person name="Blattner F.R."/>
            <person name="Plunkett G. III"/>
            <person name="Bloch C.A."/>
            <person name="Perna N.T."/>
            <person name="Burland V."/>
            <person name="Riley M."/>
            <person name="Collado-Vides J."/>
            <person name="Glasner J.D."/>
            <person name="Rode C.K."/>
            <person name="Mayhew G.F."/>
            <person name="Gregor J."/>
            <person name="Davis N.W."/>
            <person name="Kirkpatrick H.A."/>
            <person name="Goeden M.A."/>
            <person name="Rose D.J."/>
            <person name="Mau B."/>
            <person name="Shao Y."/>
        </authorList>
    </citation>
    <scope>NUCLEOTIDE SEQUENCE [LARGE SCALE GENOMIC DNA]</scope>
    <source>
        <strain>K12 / MG1655 / ATCC 47076</strain>
    </source>
</reference>
<reference key="3">
    <citation type="journal article" date="2006" name="Mol. Syst. Biol.">
        <title>Highly accurate genome sequences of Escherichia coli K-12 strains MG1655 and W3110.</title>
        <authorList>
            <person name="Hayashi K."/>
            <person name="Morooka N."/>
            <person name="Yamamoto Y."/>
            <person name="Fujita K."/>
            <person name="Isono K."/>
            <person name="Choi S."/>
            <person name="Ohtsubo E."/>
            <person name="Baba T."/>
            <person name="Wanner B.L."/>
            <person name="Mori H."/>
            <person name="Horiuchi T."/>
        </authorList>
    </citation>
    <scope>NUCLEOTIDE SEQUENCE [LARGE SCALE GENOMIC DNA]</scope>
    <source>
        <strain>K12 / W3110 / ATCC 27325 / DSM 5911</strain>
    </source>
</reference>
<reference key="4">
    <citation type="journal article" date="2013" name="Cell Rep.">
        <title>A replicase clamp-binding dynamin-like protein promotes colocalization of nascent DNA strands and equipartitioning of chromosomes in E. coli.</title>
        <authorList>
            <person name="Ozaki S."/>
            <person name="Matsuda Y."/>
            <person name="Keyamura K."/>
            <person name="Kawakami H."/>
            <person name="Noguchi Y."/>
            <person name="Kasho K."/>
            <person name="Nagata K."/>
            <person name="Masuda T."/>
            <person name="Sakiyama Y."/>
            <person name="Katayama T."/>
        </authorList>
    </citation>
    <scope>FUNCTION</scope>
    <scope>LACK OF GTPASE</scope>
    <scope>INTERACTION WITH DNAN</scope>
    <scope>SUBUNIT</scope>
    <scope>SUBCELLULAR LOCATION</scope>
    <scope>DISRUPTION PHENOTYPE</scope>
    <scope>MUTAGENESIS OF GLN-23; GLN-41 AND GLN-734</scope>
    <source>
        <strain>K12 / MG1655 / ATCC 47076</strain>
    </source>
</reference>